<name>EAF7_KLULA</name>
<protein>
    <recommendedName>
        <fullName>Chromatin modification-related protein EAF7</fullName>
    </recommendedName>
</protein>
<organism>
    <name type="scientific">Kluyveromyces lactis (strain ATCC 8585 / CBS 2359 / DSM 70799 / NBRC 1267 / NRRL Y-1140 / WM37)</name>
    <name type="common">Yeast</name>
    <name type="synonym">Candida sphaerica</name>
    <dbReference type="NCBI Taxonomy" id="284590"/>
    <lineage>
        <taxon>Eukaryota</taxon>
        <taxon>Fungi</taxon>
        <taxon>Dikarya</taxon>
        <taxon>Ascomycota</taxon>
        <taxon>Saccharomycotina</taxon>
        <taxon>Saccharomycetes</taxon>
        <taxon>Saccharomycetales</taxon>
        <taxon>Saccharomycetaceae</taxon>
        <taxon>Kluyveromyces</taxon>
    </lineage>
</organism>
<proteinExistence type="inferred from homology"/>
<gene>
    <name type="primary">EAF7</name>
    <name type="ordered locus">KLLA0A11682g</name>
</gene>
<comment type="function">
    <text evidence="1">Component of the NuA4 histone acetyltransferase complex which is involved in transcriptional activation of selected genes principally by acetylation of nucleosomal histone H4 and H2A. The NuA4 complex is also involved in DNA repair (By similarity).</text>
</comment>
<comment type="subunit">
    <text evidence="1">Component of the NuA4 histone acetyltransferase complex.</text>
</comment>
<comment type="subcellular location">
    <subcellularLocation>
        <location evidence="1">Nucleus</location>
    </subcellularLocation>
</comment>
<comment type="similarity">
    <text evidence="3">Belongs to the EAF7 family.</text>
</comment>
<reference key="1">
    <citation type="journal article" date="2004" name="Nature">
        <title>Genome evolution in yeasts.</title>
        <authorList>
            <person name="Dujon B."/>
            <person name="Sherman D."/>
            <person name="Fischer G."/>
            <person name="Durrens P."/>
            <person name="Casaregola S."/>
            <person name="Lafontaine I."/>
            <person name="de Montigny J."/>
            <person name="Marck C."/>
            <person name="Neuveglise C."/>
            <person name="Talla E."/>
            <person name="Goffard N."/>
            <person name="Frangeul L."/>
            <person name="Aigle M."/>
            <person name="Anthouard V."/>
            <person name="Babour A."/>
            <person name="Barbe V."/>
            <person name="Barnay S."/>
            <person name="Blanchin S."/>
            <person name="Beckerich J.-M."/>
            <person name="Beyne E."/>
            <person name="Bleykasten C."/>
            <person name="Boisrame A."/>
            <person name="Boyer J."/>
            <person name="Cattolico L."/>
            <person name="Confanioleri F."/>
            <person name="de Daruvar A."/>
            <person name="Despons L."/>
            <person name="Fabre E."/>
            <person name="Fairhead C."/>
            <person name="Ferry-Dumazet H."/>
            <person name="Groppi A."/>
            <person name="Hantraye F."/>
            <person name="Hennequin C."/>
            <person name="Jauniaux N."/>
            <person name="Joyet P."/>
            <person name="Kachouri R."/>
            <person name="Kerrest A."/>
            <person name="Koszul R."/>
            <person name="Lemaire M."/>
            <person name="Lesur I."/>
            <person name="Ma L."/>
            <person name="Muller H."/>
            <person name="Nicaud J.-M."/>
            <person name="Nikolski M."/>
            <person name="Oztas S."/>
            <person name="Ozier-Kalogeropoulos O."/>
            <person name="Pellenz S."/>
            <person name="Potier S."/>
            <person name="Richard G.-F."/>
            <person name="Straub M.-L."/>
            <person name="Suleau A."/>
            <person name="Swennen D."/>
            <person name="Tekaia F."/>
            <person name="Wesolowski-Louvel M."/>
            <person name="Westhof E."/>
            <person name="Wirth B."/>
            <person name="Zeniou-Meyer M."/>
            <person name="Zivanovic Y."/>
            <person name="Bolotin-Fukuhara M."/>
            <person name="Thierry A."/>
            <person name="Bouchier C."/>
            <person name="Caudron B."/>
            <person name="Scarpelli C."/>
            <person name="Gaillardin C."/>
            <person name="Weissenbach J."/>
            <person name="Wincker P."/>
            <person name="Souciet J.-L."/>
        </authorList>
    </citation>
    <scope>NUCLEOTIDE SEQUENCE [LARGE SCALE GENOMIC DNA]</scope>
    <source>
        <strain>ATCC 8585 / CBS 2359 / DSM 70799 / NBRC 1267 / NRRL Y-1140 / WM37</strain>
    </source>
</reference>
<evidence type="ECO:0000250" key="1"/>
<evidence type="ECO:0000256" key="2">
    <source>
        <dbReference type="SAM" id="MobiDB-lite"/>
    </source>
</evidence>
<evidence type="ECO:0000305" key="3"/>
<dbReference type="EMBL" id="CR382121">
    <property type="protein sequence ID" value="CAH03096.1"/>
    <property type="molecule type" value="Genomic_DNA"/>
</dbReference>
<dbReference type="RefSeq" id="XP_451508.1">
    <property type="nucleotide sequence ID" value="XM_451508.1"/>
</dbReference>
<dbReference type="FunCoup" id="Q6CX31">
    <property type="interactions" value="92"/>
</dbReference>
<dbReference type="STRING" id="284590.Q6CX31"/>
<dbReference type="PaxDb" id="284590-Q6CX31"/>
<dbReference type="KEGG" id="kla:KLLA0_A11682g"/>
<dbReference type="eggNOG" id="KOG4051">
    <property type="taxonomic scope" value="Eukaryota"/>
</dbReference>
<dbReference type="HOGENOM" id="CLU_685231_0_0_1"/>
<dbReference type="InParanoid" id="Q6CX31"/>
<dbReference type="OMA" id="PKITHNE"/>
<dbReference type="Proteomes" id="UP000000598">
    <property type="component" value="Chromosome A"/>
</dbReference>
<dbReference type="GO" id="GO:0035267">
    <property type="term" value="C:NuA4 histone acetyltransferase complex"/>
    <property type="evidence" value="ECO:0007669"/>
    <property type="project" value="TreeGrafter"/>
</dbReference>
<dbReference type="GO" id="GO:0005634">
    <property type="term" value="C:nucleus"/>
    <property type="evidence" value="ECO:0007669"/>
    <property type="project" value="UniProtKB-SubCell"/>
</dbReference>
<dbReference type="GO" id="GO:0006325">
    <property type="term" value="P:chromatin organization"/>
    <property type="evidence" value="ECO:0007669"/>
    <property type="project" value="UniProtKB-KW"/>
</dbReference>
<dbReference type="GO" id="GO:0006281">
    <property type="term" value="P:DNA repair"/>
    <property type="evidence" value="ECO:0007669"/>
    <property type="project" value="UniProtKB-KW"/>
</dbReference>
<dbReference type="GO" id="GO:0006357">
    <property type="term" value="P:regulation of transcription by RNA polymerase II"/>
    <property type="evidence" value="ECO:0007669"/>
    <property type="project" value="TreeGrafter"/>
</dbReference>
<dbReference type="InterPro" id="IPR012423">
    <property type="entry name" value="Eaf7/MRGBP"/>
</dbReference>
<dbReference type="PANTHER" id="PTHR13581">
    <property type="entry name" value="MRG-BINDING PROTEIN"/>
    <property type="match status" value="1"/>
</dbReference>
<dbReference type="PANTHER" id="PTHR13581:SF5">
    <property type="entry name" value="MRG_MORF4L-BINDING PROTEIN"/>
    <property type="match status" value="1"/>
</dbReference>
<dbReference type="Pfam" id="PF07904">
    <property type="entry name" value="Eaf7"/>
    <property type="match status" value="1"/>
</dbReference>
<keyword id="KW-0156">Chromatin regulator</keyword>
<keyword id="KW-0227">DNA damage</keyword>
<keyword id="KW-0234">DNA repair</keyword>
<keyword id="KW-0539">Nucleus</keyword>
<keyword id="KW-1185">Reference proteome</keyword>
<keyword id="KW-0804">Transcription</keyword>
<keyword id="KW-0805">Transcription regulation</keyword>
<feature type="chain" id="PRO_0000215880" description="Chromatin modification-related protein EAF7">
    <location>
        <begin position="1"/>
        <end position="402"/>
    </location>
</feature>
<feature type="region of interest" description="Disordered" evidence="2">
    <location>
        <begin position="92"/>
        <end position="128"/>
    </location>
</feature>
<feature type="region of interest" description="Disordered" evidence="2">
    <location>
        <begin position="172"/>
        <end position="402"/>
    </location>
</feature>
<feature type="compositionally biased region" description="Acidic residues" evidence="2">
    <location>
        <begin position="116"/>
        <end position="128"/>
    </location>
</feature>
<feature type="compositionally biased region" description="Basic and acidic residues" evidence="2">
    <location>
        <begin position="172"/>
        <end position="192"/>
    </location>
</feature>
<feature type="compositionally biased region" description="Basic and acidic residues" evidence="2">
    <location>
        <begin position="203"/>
        <end position="213"/>
    </location>
</feature>
<feature type="compositionally biased region" description="Polar residues" evidence="2">
    <location>
        <begin position="219"/>
        <end position="233"/>
    </location>
</feature>
<feature type="compositionally biased region" description="Basic residues" evidence="2">
    <location>
        <begin position="256"/>
        <end position="271"/>
    </location>
</feature>
<feature type="compositionally biased region" description="Basic and acidic residues" evidence="2">
    <location>
        <begin position="281"/>
        <end position="311"/>
    </location>
</feature>
<sequence>MSAVKIESPRGQTWSKVEEIRLFKWMMLFKPAGIHKHFHMVCLLERLNKPDQYPIKLLQSDKGSSDKVFSGEDVWEQLSRYYNLEKADEVENQPYPEFYNDDGPTETTNKKTEGDAQLDNDDDSDNDVDNCDELKRNIIPLQNRLQQETEFELSWEDYGELMLEHARDHEVEDIKQEETASADDKAKLKGAESQDTQVEQESEEPREREKDIDEKDTEQNNVQAKQEMATTPPVSVGESVSELANEPVDEPVDAHKKPRTRRSTRLTRSQKRGIDDESENKEDQPHGGNTDEKEDVEHDTEGRSGSEKESTADAADTTATKQVTFADESEGAAKESANSPTGKAEENETESSQQPRPKKQKVAAAEEVPEDLADVDSPARRTRRKSITKPTTRLSSRLRSRK</sequence>
<accession>Q6CX31</accession>